<feature type="chain" id="PRO_0000308932" description="Poly(A) polymerase catalytic subunit">
    <location>
        <begin position="1"/>
        <end position="479"/>
    </location>
</feature>
<feature type="active site" evidence="2">
    <location>
        <position position="202"/>
    </location>
</feature>
<feature type="active site" evidence="2">
    <location>
        <position position="204"/>
    </location>
</feature>
<feature type="binding site" evidence="1">
    <location>
        <position position="202"/>
    </location>
    <ligand>
        <name>Ca(2+)</name>
        <dbReference type="ChEBI" id="CHEBI:29108"/>
        <label>1</label>
    </ligand>
</feature>
<feature type="binding site" evidence="1">
    <location>
        <position position="202"/>
    </location>
    <ligand>
        <name>Ca(2+)</name>
        <dbReference type="ChEBI" id="CHEBI:29108"/>
        <label>2</label>
    </ligand>
</feature>
<feature type="binding site" evidence="1">
    <location>
        <position position="204"/>
    </location>
    <ligand>
        <name>Ca(2+)</name>
        <dbReference type="ChEBI" id="CHEBI:29108"/>
        <label>1</label>
    </ligand>
</feature>
<feature type="binding site" evidence="1">
    <location>
        <position position="204"/>
    </location>
    <ligand>
        <name>Ca(2+)</name>
        <dbReference type="ChEBI" id="CHEBI:29108"/>
        <label>2</label>
    </ligand>
</feature>
<feature type="binding site" evidence="1">
    <location>
        <position position="253"/>
    </location>
    <ligand>
        <name>Ca(2+)</name>
        <dbReference type="ChEBI" id="CHEBI:29108"/>
        <label>2</label>
    </ligand>
</feature>
<proteinExistence type="inferred from homology"/>
<organismHost>
    <name type="scientific">Mus musculus</name>
    <name type="common">Mouse</name>
    <dbReference type="NCBI Taxonomy" id="10090"/>
</organismHost>
<comment type="function">
    <text evidence="1">Polymerase that creates the 3'-poly(A) tail of mRNA's.</text>
</comment>
<comment type="catalytic activity">
    <reaction evidence="1">
        <text>RNA(n) + ATP = RNA(n)-3'-adenine ribonucleotide + diphosphate</text>
        <dbReference type="Rhea" id="RHEA:11332"/>
        <dbReference type="Rhea" id="RHEA-COMP:14527"/>
        <dbReference type="Rhea" id="RHEA-COMP:17347"/>
        <dbReference type="ChEBI" id="CHEBI:30616"/>
        <dbReference type="ChEBI" id="CHEBI:33019"/>
        <dbReference type="ChEBI" id="CHEBI:140395"/>
        <dbReference type="ChEBI" id="CHEBI:173115"/>
        <dbReference type="EC" id="2.7.7.19"/>
    </reaction>
</comment>
<comment type="subunit">
    <text evidence="1">Heterodimer of a large (catalytic) subunit and a small (regulatory) subunit.</text>
</comment>
<comment type="induction">
    <text evidence="1">Expressed in the early phase of the viral replicative cycle.</text>
</comment>
<comment type="similarity">
    <text evidence="3">Belongs to the poxviridae poly(A) polymerase catalytic subunit family.</text>
</comment>
<dbReference type="EC" id="2.7.7.19"/>
<dbReference type="EMBL" id="AF012825">
    <property type="protein sequence ID" value="AAM92345.1"/>
    <property type="molecule type" value="Genomic_DNA"/>
</dbReference>
<dbReference type="RefSeq" id="NP_671559.1">
    <property type="nucleotide sequence ID" value="NC_004105.1"/>
</dbReference>
<dbReference type="SMR" id="Q8JLG4"/>
<dbReference type="GeneID" id="951503"/>
<dbReference type="KEGG" id="vg:951503"/>
<dbReference type="Proteomes" id="UP000172110">
    <property type="component" value="Segment"/>
</dbReference>
<dbReference type="GO" id="GO:0005524">
    <property type="term" value="F:ATP binding"/>
    <property type="evidence" value="ECO:0007669"/>
    <property type="project" value="UniProtKB-KW"/>
</dbReference>
<dbReference type="GO" id="GO:0046872">
    <property type="term" value="F:metal ion binding"/>
    <property type="evidence" value="ECO:0007669"/>
    <property type="project" value="UniProtKB-KW"/>
</dbReference>
<dbReference type="GO" id="GO:1990817">
    <property type="term" value="F:poly(A) RNA polymerase activity"/>
    <property type="evidence" value="ECO:0007669"/>
    <property type="project" value="UniProtKB-EC"/>
</dbReference>
<dbReference type="GO" id="GO:0006397">
    <property type="term" value="P:mRNA processing"/>
    <property type="evidence" value="ECO:0007669"/>
    <property type="project" value="UniProtKB-KW"/>
</dbReference>
<dbReference type="CDD" id="cd20919">
    <property type="entry name" value="polyA_pol_Pox"/>
    <property type="match status" value="1"/>
</dbReference>
<dbReference type="Gene3D" id="1.20.1270.320">
    <property type="entry name" value="Poxvirus poly(A) polymerase, N domain"/>
    <property type="match status" value="1"/>
</dbReference>
<dbReference type="Gene3D" id="3.30.460.60">
    <property type="entry name" value="Poxvirus poly(A) polymerase, nucleotidyltransferase domain"/>
    <property type="match status" value="1"/>
</dbReference>
<dbReference type="InterPro" id="IPR004976">
    <property type="entry name" value="PolyA_pol_cat_Poxvir"/>
</dbReference>
<dbReference type="InterPro" id="IPR037265">
    <property type="entry name" value="PolyA_pol_cat_sf"/>
</dbReference>
<dbReference type="InterPro" id="IPR024231">
    <property type="entry name" value="PolyA_pol_nucTrfase_Poxvir"/>
</dbReference>
<dbReference type="InterPro" id="IPR038419">
    <property type="entry name" value="PolyA_pol_nucTrfase_sf_Poxvir"/>
</dbReference>
<dbReference type="InterPro" id="IPR024397">
    <property type="entry name" value="Poxvirus_polyA_pol_cat_C"/>
</dbReference>
<dbReference type="InterPro" id="IPR024398">
    <property type="entry name" value="Poxvirus_polyA_pol_cat_N"/>
</dbReference>
<dbReference type="InterPro" id="IPR038337">
    <property type="entry name" value="Poxvirus_polyA_pol_cat_N_sf"/>
</dbReference>
<dbReference type="Pfam" id="PF03296">
    <property type="entry name" value="Pox_polyA_pol"/>
    <property type="match status" value="1"/>
</dbReference>
<dbReference type="Pfam" id="PF12629">
    <property type="entry name" value="Pox_polyA_pol_C"/>
    <property type="match status" value="1"/>
</dbReference>
<dbReference type="Pfam" id="PF12630">
    <property type="entry name" value="Pox_polyA_pol_N"/>
    <property type="match status" value="1"/>
</dbReference>
<dbReference type="PIRSF" id="PIRSF015693">
    <property type="entry name" value="VAC-48L_nuct"/>
    <property type="match status" value="1"/>
</dbReference>
<dbReference type="SUPFAM" id="SSF160957">
    <property type="entry name" value="Poly(A) polymerase catalytic subunit-like"/>
    <property type="match status" value="1"/>
</dbReference>
<keyword id="KW-0067">ATP-binding</keyword>
<keyword id="KW-0106">Calcium</keyword>
<keyword id="KW-0244">Early protein</keyword>
<keyword id="KW-0479">Metal-binding</keyword>
<keyword id="KW-0507">mRNA processing</keyword>
<keyword id="KW-0547">Nucleotide-binding</keyword>
<keyword id="KW-0804">Transcription</keyword>
<keyword id="KW-0808">Transferase</keyword>
<sequence length="479" mass="55509">MNRNPDQNTLPNITLKIIETYLGRLPSVNEYHMLKLQTRNIQKITVFNKDIFVSLVKKNKKRFFSDVDTSASEIKDRILSYFSKQTQTYNIGKLFTIIELQSVLVTTYTDILGVLTIKAPNVISSKISYNVTSMEELARDMLNSMNVAVIDKAKVMGRHNVSSLVKNVNKLMEEYLRRHNKSCICYGSYSLYLINPNIRYGDIDILQTNSRTFLIDLAFLIKFITGNNIILSKIPYLRNYMVIKDENDNHIIDSFNIRQDTMNVVPKIFIDNIYIVDPTFQLLNMIKMFSQIDRLEDLSKDPEKFNARMATMLEYVRYTHGIVFDGTRNNMPMKCIIDENTRIVTVTTKDYFSFKKCLVYLDENVLSSDILDLNADTSCDFESVTNSVYLIHDNIMYTYFSNTILLSDKGTVHEISARGLCAHILLYQMLTSGEYKQCLSDLLNSMMNRDKIPIYSHTERDKKPGRHGFINIEKDIIVF</sequence>
<evidence type="ECO:0000250" key="1">
    <source>
        <dbReference type="UniProtKB" id="P23371"/>
    </source>
</evidence>
<evidence type="ECO:0000255" key="2">
    <source>
        <dbReference type="PIRSR" id="PIRSR015693-50"/>
    </source>
</evidence>
<evidence type="ECO:0000305" key="3"/>
<gene>
    <name type="primary">OPG063</name>
    <name type="synonym">PAPL</name>
    <name type="ordered locus">EVM041</name>
</gene>
<accession>Q8JLG4</accession>
<reference key="1">
    <citation type="journal article" date="2003" name="Virology">
        <title>The genomic sequence of Ectromelia virus, the causative agent of mousepox.</title>
        <authorList>
            <person name="Chen N."/>
            <person name="Danila M.I."/>
            <person name="Feng Z."/>
            <person name="Buller R.M."/>
            <person name="Wang C."/>
            <person name="Han X."/>
            <person name="Lefkowitz E.J."/>
            <person name="Upton C."/>
        </authorList>
    </citation>
    <scope>NUCLEOTIDE SEQUENCE [LARGE SCALE GENOMIC DNA]</scope>
</reference>
<protein>
    <recommendedName>
        <fullName>Poly(A) polymerase catalytic subunit</fullName>
        <ecNumber>2.7.7.19</ecNumber>
    </recommendedName>
    <alternativeName>
        <fullName>Poly(A) polymerase large subunit</fullName>
        <shortName>PAP-L</shortName>
    </alternativeName>
</protein>
<name>PAP1_ECTVM</name>
<organism>
    <name type="scientific">Ectromelia virus (strain Moscow)</name>
    <name type="common">ECTV</name>
    <name type="synonym">Mousepox virus</name>
    <dbReference type="NCBI Taxonomy" id="265874"/>
    <lineage>
        <taxon>Viruses</taxon>
        <taxon>Varidnaviria</taxon>
        <taxon>Bamfordvirae</taxon>
        <taxon>Nucleocytoviricota</taxon>
        <taxon>Pokkesviricetes</taxon>
        <taxon>Chitovirales</taxon>
        <taxon>Poxviridae</taxon>
        <taxon>Chordopoxvirinae</taxon>
        <taxon>Orthopoxvirus</taxon>
        <taxon>Ectromelia virus</taxon>
    </lineage>
</organism>